<feature type="chain" id="PRO_0000087904" description="Type II methyltransferase M.PspPI">
    <location>
        <begin position="1"/>
        <end position="416"/>
    </location>
</feature>
<feature type="domain" description="SAM-dependent MTase C5-type" evidence="1">
    <location>
        <begin position="77"/>
        <end position="410"/>
    </location>
</feature>
<feature type="active site" evidence="1 2">
    <location>
        <position position="149"/>
    </location>
</feature>
<keyword id="KW-0238">DNA-binding</keyword>
<keyword id="KW-0489">Methyltransferase</keyword>
<keyword id="KW-0680">Restriction system</keyword>
<keyword id="KW-0949">S-adenosyl-L-methionine</keyword>
<keyword id="KW-0808">Transferase</keyword>
<dbReference type="EC" id="2.1.1.37"/>
<dbReference type="EMBL" id="Y07554">
    <property type="protein sequence ID" value="CAA68841.1"/>
    <property type="molecule type" value="Genomic_DNA"/>
</dbReference>
<dbReference type="SMR" id="O33481"/>
<dbReference type="REBASE" id="203181">
    <property type="entry name" value="M.Bam1267ORF3198P"/>
</dbReference>
<dbReference type="REBASE" id="2771">
    <property type="entry name" value="PspPI"/>
</dbReference>
<dbReference type="REBASE" id="3564">
    <property type="entry name" value="M.PspPI"/>
</dbReference>
<dbReference type="PRO" id="PR:O33481"/>
<dbReference type="GO" id="GO:0003886">
    <property type="term" value="F:DNA (cytosine-5-)-methyltransferase activity"/>
    <property type="evidence" value="ECO:0007669"/>
    <property type="project" value="UniProtKB-EC"/>
</dbReference>
<dbReference type="GO" id="GO:0003677">
    <property type="term" value="F:DNA binding"/>
    <property type="evidence" value="ECO:0007669"/>
    <property type="project" value="UniProtKB-KW"/>
</dbReference>
<dbReference type="GO" id="GO:0009307">
    <property type="term" value="P:DNA restriction-modification system"/>
    <property type="evidence" value="ECO:0007669"/>
    <property type="project" value="UniProtKB-KW"/>
</dbReference>
<dbReference type="GO" id="GO:0032259">
    <property type="term" value="P:methylation"/>
    <property type="evidence" value="ECO:0007669"/>
    <property type="project" value="UniProtKB-KW"/>
</dbReference>
<dbReference type="GO" id="GO:0044027">
    <property type="term" value="P:negative regulation of gene expression via chromosomal CpG island methylation"/>
    <property type="evidence" value="ECO:0007669"/>
    <property type="project" value="TreeGrafter"/>
</dbReference>
<dbReference type="CDD" id="cd00315">
    <property type="entry name" value="Cyt_C5_DNA_methylase"/>
    <property type="match status" value="1"/>
</dbReference>
<dbReference type="Gene3D" id="3.90.120.10">
    <property type="entry name" value="DNA Methylase, subunit A, domain 2"/>
    <property type="match status" value="1"/>
</dbReference>
<dbReference type="Gene3D" id="3.40.50.150">
    <property type="entry name" value="Vaccinia Virus protein VP39"/>
    <property type="match status" value="1"/>
</dbReference>
<dbReference type="InterPro" id="IPR050390">
    <property type="entry name" value="C5-Methyltransferase"/>
</dbReference>
<dbReference type="InterPro" id="IPR018117">
    <property type="entry name" value="C5_DNA_meth_AS"/>
</dbReference>
<dbReference type="InterPro" id="IPR001525">
    <property type="entry name" value="C5_MeTfrase"/>
</dbReference>
<dbReference type="InterPro" id="IPR031303">
    <property type="entry name" value="C5_meth_CS"/>
</dbReference>
<dbReference type="InterPro" id="IPR029063">
    <property type="entry name" value="SAM-dependent_MTases_sf"/>
</dbReference>
<dbReference type="NCBIfam" id="TIGR00675">
    <property type="entry name" value="dcm"/>
    <property type="match status" value="1"/>
</dbReference>
<dbReference type="PANTHER" id="PTHR10629">
    <property type="entry name" value="CYTOSINE-SPECIFIC METHYLTRANSFERASE"/>
    <property type="match status" value="1"/>
</dbReference>
<dbReference type="PANTHER" id="PTHR10629:SF52">
    <property type="entry name" value="DNA (CYTOSINE-5)-METHYLTRANSFERASE 1"/>
    <property type="match status" value="1"/>
</dbReference>
<dbReference type="Pfam" id="PF00145">
    <property type="entry name" value="DNA_methylase"/>
    <property type="match status" value="1"/>
</dbReference>
<dbReference type="PRINTS" id="PR00105">
    <property type="entry name" value="C5METTRFRASE"/>
</dbReference>
<dbReference type="SUPFAM" id="SSF53335">
    <property type="entry name" value="S-adenosyl-L-methionine-dependent methyltransferases"/>
    <property type="match status" value="1"/>
</dbReference>
<dbReference type="PROSITE" id="PS00094">
    <property type="entry name" value="C5_MTASE_1"/>
    <property type="match status" value="1"/>
</dbReference>
<dbReference type="PROSITE" id="PS00095">
    <property type="entry name" value="C5_MTASE_2"/>
    <property type="match status" value="1"/>
</dbReference>
<dbReference type="PROSITE" id="PS51679">
    <property type="entry name" value="SAM_MT_C5"/>
    <property type="match status" value="1"/>
</dbReference>
<sequence length="416" mass="46858">MKFPDNHFSAAIVADTLSVSKRNVETWTQNGKLVPALDPNIHEKPYTKDQLETFEQFSAMFNSSWCEEMAVEPSRSYSLVELFAGAGGLALGLEQAGFKSVLLNEKDKYACATLRANRPNWNVIEDDIENVDFTHLNGKVDLLTGGFPCQPFSYAGKQLGFEDLRGTLVFEMARAIKEIKPKVFLAENVKGLAENDGGRTLSIIIKVLEDLGYKILEKEVYKAIFYKVPQKRERLIIIGVRTDLYDKLAYEKPSPYYKVLTVADALKAGELYDVDVPESTGQLYPERKAEIMSYVPEGGYWRDLPIRIAKEYMMKSFYLGGGKTGMARRLSWDEPSLTLVCTPAQKQTERCHPSESRPLTTREYARIQTFPDDWEFKGSVGQIYKQIGNAVPVNLALAIGKAIIRMLNAAPKDVFE</sequence>
<evidence type="ECO:0000255" key="1">
    <source>
        <dbReference type="PROSITE-ProRule" id="PRU01016"/>
    </source>
</evidence>
<evidence type="ECO:0000255" key="2">
    <source>
        <dbReference type="PROSITE-ProRule" id="PRU10018"/>
    </source>
</evidence>
<evidence type="ECO:0000269" key="3">
    <source>
    </source>
</evidence>
<evidence type="ECO:0000303" key="4">
    <source>
    </source>
</evidence>
<evidence type="ECO:0000303" key="5">
    <source>
    </source>
</evidence>
<gene>
    <name evidence="5" type="primary">pspPIM</name>
</gene>
<reference key="1">
    <citation type="journal article" date="1997" name="Gene">
        <title>Cloning and characterization of the gene encoding PspPI methyltransferase from the Antarctic psychrotroph Psychrobacter sp. strain TA137. Predicted interactions with DNA and organization of the variable region.</title>
        <authorList>
            <person name="Rina M."/>
            <person name="Caufrier F."/>
            <person name="Markaki M."/>
            <person name="Mavromatis K."/>
            <person name="Kokkinidis M."/>
            <person name="Bouriotis V."/>
        </authorList>
    </citation>
    <scope>NUCLEOTIDE SEQUENCE [GENOMIC DNA]</scope>
    <scope>FUNCTION</scope>
    <source>
        <strain>TA137</strain>
    </source>
</reference>
<reference key="2">
    <citation type="journal article" date="2003" name="Nucleic Acids Res.">
        <title>A nomenclature for restriction enzymes, DNA methyltransferases, homing endonucleases and their genes.</title>
        <authorList>
            <person name="Roberts R.J."/>
            <person name="Belfort M."/>
            <person name="Bestor T."/>
            <person name="Bhagwat A.S."/>
            <person name="Bickle T.A."/>
            <person name="Bitinaite J."/>
            <person name="Blumenthal R.M."/>
            <person name="Degtyarev S.K."/>
            <person name="Dryden D.T."/>
            <person name="Dybvig K."/>
            <person name="Firman K."/>
            <person name="Gromova E.S."/>
            <person name="Gumport R.I."/>
            <person name="Halford S.E."/>
            <person name="Hattman S."/>
            <person name="Heitman J."/>
            <person name="Hornby D.P."/>
            <person name="Janulaitis A."/>
            <person name="Jeltsch A."/>
            <person name="Josephsen J."/>
            <person name="Kiss A."/>
            <person name="Klaenhammer T.R."/>
            <person name="Kobayashi I."/>
            <person name="Kong H."/>
            <person name="Krueger D.H."/>
            <person name="Lacks S."/>
            <person name="Marinus M.G."/>
            <person name="Miyahara M."/>
            <person name="Morgan R.D."/>
            <person name="Murray N.E."/>
            <person name="Nagaraja V."/>
            <person name="Piekarowicz A."/>
            <person name="Pingoud A."/>
            <person name="Raleigh E."/>
            <person name="Rao D.N."/>
            <person name="Reich N."/>
            <person name="Repin V.E."/>
            <person name="Selker E.U."/>
            <person name="Shaw P.C."/>
            <person name="Stein D.C."/>
            <person name="Stoddard B.L."/>
            <person name="Szybalski W."/>
            <person name="Trautner T.A."/>
            <person name="Van Etten J.L."/>
            <person name="Vitor J.M."/>
            <person name="Wilson G.G."/>
            <person name="Xu S.Y."/>
        </authorList>
    </citation>
    <scope>NOMENCLATURE</scope>
</reference>
<protein>
    <recommendedName>
        <fullName evidence="4">Type II methyltransferase M.PspPI</fullName>
        <shortName evidence="4">M.PspPI</shortName>
        <ecNumber>2.1.1.37</ecNumber>
    </recommendedName>
    <alternativeName>
        <fullName>Cytosine-specific methyltransferase PspPI</fullName>
    </alternativeName>
    <alternativeName>
        <fullName>Modification methylase PspPI</fullName>
    </alternativeName>
</protein>
<proteinExistence type="inferred from homology"/>
<accession>O33481</accession>
<organism>
    <name type="scientific">Psychrobacter sp. (strain TA137)</name>
    <dbReference type="NCBI Taxonomy" id="203703"/>
    <lineage>
        <taxon>Bacteria</taxon>
        <taxon>Pseudomonadati</taxon>
        <taxon>Pseudomonadota</taxon>
        <taxon>Gammaproteobacteria</taxon>
        <taxon>Moraxellales</taxon>
        <taxon>Moraxellaceae</taxon>
        <taxon>Psychrobacter</taxon>
    </lineage>
</organism>
<name>MTP1_PSYTA</name>
<comment type="function">
    <text evidence="3 4">A methylase, recognizes the double-stranded sequence 5'-GGNCC-3', methylates C-4 on both strands, and protects the DNA from cleavage by the PspPI endonuclease.</text>
</comment>
<comment type="catalytic activity">
    <reaction evidence="2">
        <text>a 2'-deoxycytidine in DNA + S-adenosyl-L-methionine = a 5-methyl-2'-deoxycytidine in DNA + S-adenosyl-L-homocysteine + H(+)</text>
        <dbReference type="Rhea" id="RHEA:13681"/>
        <dbReference type="Rhea" id="RHEA-COMP:11369"/>
        <dbReference type="Rhea" id="RHEA-COMP:11370"/>
        <dbReference type="ChEBI" id="CHEBI:15378"/>
        <dbReference type="ChEBI" id="CHEBI:57856"/>
        <dbReference type="ChEBI" id="CHEBI:59789"/>
        <dbReference type="ChEBI" id="CHEBI:85452"/>
        <dbReference type="ChEBI" id="CHEBI:85454"/>
        <dbReference type="EC" id="2.1.1.37"/>
    </reaction>
</comment>
<comment type="similarity">
    <text evidence="1">Belongs to the class I-like SAM-binding methyltransferase superfamily. C5-methyltransferase family.</text>
</comment>